<feature type="signal peptide" evidence="2">
    <location>
        <begin position="1"/>
        <end position="16"/>
    </location>
</feature>
<feature type="propeptide" id="PRO_0000401859" evidence="1">
    <location>
        <begin position="17"/>
        <end position="54"/>
    </location>
</feature>
<feature type="chain" id="PRO_0000401860" description="U13-lycotoxin-Ls1c">
    <location>
        <begin position="55"/>
        <end position="120"/>
    </location>
</feature>
<feature type="domain" description="Agouti">
    <location>
        <begin position="56"/>
        <end position="95"/>
    </location>
</feature>
<feature type="disulfide bond" evidence="1">
    <location>
        <begin position="56"/>
        <end position="70"/>
    </location>
</feature>
<feature type="disulfide bond" evidence="1">
    <location>
        <begin position="69"/>
        <end position="87"/>
    </location>
</feature>
<feature type="disulfide bond" evidence="1">
    <location>
        <begin position="78"/>
        <end position="85"/>
    </location>
</feature>
<evidence type="ECO:0000250" key="1"/>
<evidence type="ECO:0000255" key="2"/>
<evidence type="ECO:0000305" key="3"/>
<sequence length="120" mass="13828">MKILFVLISILYAVYCFSSEEDVDSAYLANELEPVEDINSEQYAALEPKEEQERSCADMGQDRKDDCDCCLNIATCNCWFGRYFCSCTFGDYQTCLRKKGKCKRNRPQSCPRSNLNRKKG</sequence>
<dbReference type="EMBL" id="EU926104">
    <property type="protein sequence ID" value="ACI41436.1"/>
    <property type="molecule type" value="mRNA"/>
</dbReference>
<dbReference type="EMBL" id="FM864108">
    <property type="protein sequence ID" value="CAS03705.1"/>
    <property type="molecule type" value="mRNA"/>
</dbReference>
<dbReference type="SMR" id="B6DD20"/>
<dbReference type="ArachnoServer" id="AS001043">
    <property type="toxin name" value="U13-lycotoxin-Ls1c"/>
</dbReference>
<dbReference type="GO" id="GO:0005576">
    <property type="term" value="C:extracellular region"/>
    <property type="evidence" value="ECO:0007669"/>
    <property type="project" value="UniProtKB-SubCell"/>
</dbReference>
<dbReference type="GO" id="GO:0090729">
    <property type="term" value="F:toxin activity"/>
    <property type="evidence" value="ECO:0007669"/>
    <property type="project" value="UniProtKB-KW"/>
</dbReference>
<keyword id="KW-1015">Disulfide bond</keyword>
<keyword id="KW-0964">Secreted</keyword>
<keyword id="KW-0732">Signal</keyword>
<keyword id="KW-0800">Toxin</keyword>
<organism>
    <name type="scientific">Lycosa singoriensis</name>
    <name type="common">Wolf spider</name>
    <name type="synonym">Aranea singoriensis</name>
    <dbReference type="NCBI Taxonomy" id="434756"/>
    <lineage>
        <taxon>Eukaryota</taxon>
        <taxon>Metazoa</taxon>
        <taxon>Ecdysozoa</taxon>
        <taxon>Arthropoda</taxon>
        <taxon>Chelicerata</taxon>
        <taxon>Arachnida</taxon>
        <taxon>Araneae</taxon>
        <taxon>Araneomorphae</taxon>
        <taxon>Entelegynae</taxon>
        <taxon>Lycosoidea</taxon>
        <taxon>Lycosidae</taxon>
        <taxon>Lycosa</taxon>
    </lineage>
</organism>
<proteinExistence type="evidence at transcript level"/>
<name>TXD02_LYCSI</name>
<protein>
    <recommendedName>
        <fullName>U13-lycotoxin-Ls1c</fullName>
    </recommendedName>
    <alternativeName>
        <fullName>Toxin-like structure LSTX-L2</fullName>
    </alternativeName>
</protein>
<comment type="subcellular location">
    <subcellularLocation>
        <location evidence="1">Secreted</location>
    </subcellularLocation>
</comment>
<comment type="tissue specificity">
    <text>Expressed by the venom gland.</text>
</comment>
<comment type="PTM">
    <text evidence="3">Contains 5 disulfide bonds.</text>
</comment>
<comment type="similarity">
    <text evidence="3">Belongs to the neurotoxin 05 (agouti) family.</text>
</comment>
<comment type="caution">
    <text evidence="3">In contrast to other members of this family, lacks the conserved Cys in position 69, which is replaced by an Arg.</text>
</comment>
<reference key="1">
    <citation type="journal article" date="2010" name="Zoology">
        <title>Transcriptome analysis of the venom glands of the Chinese wolf spider Lycosa singoriensis.</title>
        <authorList>
            <person name="Zhang Y."/>
            <person name="Chen J."/>
            <person name="Tang X."/>
            <person name="Wang F."/>
            <person name="Jiang L."/>
            <person name="Xiong X."/>
            <person name="Wang M."/>
            <person name="Rong M."/>
            <person name="Liu Z."/>
            <person name="Liang S."/>
        </authorList>
    </citation>
    <scope>NUCLEOTIDE SEQUENCE [LARGE SCALE MRNA]</scope>
    <source>
        <tissue>Venom gland</tissue>
    </source>
</reference>
<accession>B6DD20</accession>